<accession>O34614</accession>
<accession>Q795P8</accession>
<dbReference type="EC" id="2.1.1.61" evidence="1"/>
<dbReference type="EMBL" id="AF008220">
    <property type="protein sequence ID" value="AAC00379.1"/>
    <property type="molecule type" value="Genomic_DNA"/>
</dbReference>
<dbReference type="EMBL" id="AL009126">
    <property type="protein sequence ID" value="CAB15027.1"/>
    <property type="molecule type" value="Genomic_DNA"/>
</dbReference>
<dbReference type="PIR" id="E69999">
    <property type="entry name" value="E69999"/>
</dbReference>
<dbReference type="RefSeq" id="NP_390927.1">
    <property type="nucleotide sequence ID" value="NC_000964.3"/>
</dbReference>
<dbReference type="RefSeq" id="WP_004398483.1">
    <property type="nucleotide sequence ID" value="NZ_OZ025638.1"/>
</dbReference>
<dbReference type="PDB" id="8H0S">
    <property type="method" value="X-ray"/>
    <property type="resolution" value="2.90 A"/>
    <property type="chains" value="A/B/C/D=1-194"/>
</dbReference>
<dbReference type="PDB" id="8H0T">
    <property type="method" value="X-ray"/>
    <property type="resolution" value="1.17 A"/>
    <property type="chains" value="A=1-194"/>
</dbReference>
<dbReference type="PDBsum" id="8H0S"/>
<dbReference type="PDBsum" id="8H0T"/>
<dbReference type="SMR" id="O34614"/>
<dbReference type="FunCoup" id="O34614">
    <property type="interactions" value="59"/>
</dbReference>
<dbReference type="STRING" id="224308.BSU30490"/>
<dbReference type="PaxDb" id="224308-BSU30490"/>
<dbReference type="EnsemblBacteria" id="CAB15027">
    <property type="protein sequence ID" value="CAB15027"/>
    <property type="gene ID" value="BSU_30490"/>
</dbReference>
<dbReference type="GeneID" id="938058"/>
<dbReference type="KEGG" id="bsu:BSU30490"/>
<dbReference type="PATRIC" id="fig|224308.179.peg.3307"/>
<dbReference type="eggNOG" id="COG2519">
    <property type="taxonomic scope" value="Bacteria"/>
</dbReference>
<dbReference type="InParanoid" id="O34614"/>
<dbReference type="OrthoDB" id="9792989at2"/>
<dbReference type="PhylomeDB" id="O34614"/>
<dbReference type="BioCyc" id="BSUB:BSU30490-MONOMER"/>
<dbReference type="Proteomes" id="UP000001570">
    <property type="component" value="Chromosome"/>
</dbReference>
<dbReference type="GO" id="GO:0004808">
    <property type="term" value="F:tRNA (5-methylaminomethyl-2-thiouridylate)(34)-methyltransferase activity"/>
    <property type="evidence" value="ECO:0007669"/>
    <property type="project" value="RHEA"/>
</dbReference>
<dbReference type="GO" id="GO:0032259">
    <property type="term" value="P:methylation"/>
    <property type="evidence" value="ECO:0007669"/>
    <property type="project" value="UniProtKB-KW"/>
</dbReference>
<dbReference type="GO" id="GO:0008033">
    <property type="term" value="P:tRNA processing"/>
    <property type="evidence" value="ECO:0007669"/>
    <property type="project" value="UniProtKB-KW"/>
</dbReference>
<dbReference type="Gene3D" id="3.40.50.150">
    <property type="entry name" value="Vaccinia Virus protein VP39"/>
    <property type="match status" value="1"/>
</dbReference>
<dbReference type="InterPro" id="IPR010719">
    <property type="entry name" value="MnmM_MeTrfase"/>
</dbReference>
<dbReference type="InterPro" id="IPR029063">
    <property type="entry name" value="SAM-dependent_MTases_sf"/>
</dbReference>
<dbReference type="PANTHER" id="PTHR35276">
    <property type="entry name" value="S-ADENOSYL-L-METHIONINE-DEPENDENT METHYLTRANSFERASES SUPERFAMILY PROTEIN"/>
    <property type="match status" value="1"/>
</dbReference>
<dbReference type="PANTHER" id="PTHR35276:SF1">
    <property type="entry name" value="TRNA (MNM(5)S(2)U34)-METHYLTRANSFERASE, CHLOROPLASTIC"/>
    <property type="match status" value="1"/>
</dbReference>
<dbReference type="Pfam" id="PF06962">
    <property type="entry name" value="rRNA_methylase"/>
    <property type="match status" value="1"/>
</dbReference>
<dbReference type="SUPFAM" id="SSF53335">
    <property type="entry name" value="S-adenosyl-L-methionine-dependent methyltransferases"/>
    <property type="match status" value="1"/>
</dbReference>
<sequence>MILKKILPYSKELLKMAAGEGDIVVDATMGNGHDTQFLAELVGENGHVYAFDIQESAVANTKERLGDMYQARTTLFHKSHDKIAESLPPETHGKVAAAVFNLGYLPGGDKSITTNGSSTIKAIEQLLSIMKDEGLIVLVVYHGHPEGKAEKNDVLEFCRDLDQQTARVLTYGFINQQNDPPFIVAIEKKAQISK</sequence>
<protein>
    <recommendedName>
        <fullName evidence="3">tRNA (mnm(5)s(2)U34)-methyltransferase</fullName>
        <ecNumber evidence="1">2.1.1.61</ecNumber>
    </recommendedName>
    <alternativeName>
        <fullName evidence="2">5-aminomethyl-2-thiouridine methyltransferase</fullName>
    </alternativeName>
    <alternativeName>
        <fullName evidence="2">MnmC-like methyltransferase</fullName>
    </alternativeName>
    <alternativeName>
        <fullName evidence="2">bsMnmM</fullName>
    </alternativeName>
    <alternativeName>
        <fullName evidence="3">tRNA 5-(aminomethyl)-2-thiouridylate-methyltransferase</fullName>
    </alternativeName>
</protein>
<reference key="1">
    <citation type="journal article" date="1997" name="Microbiology">
        <title>Sequencing and functional annotation of the Bacillus subtilis genes in the 200 kb rrnB-dnaB region.</title>
        <authorList>
            <person name="Lapidus A."/>
            <person name="Galleron N."/>
            <person name="Sorokin A."/>
            <person name="Ehrlich S.D."/>
        </authorList>
    </citation>
    <scope>NUCLEOTIDE SEQUENCE [GENOMIC DNA]</scope>
    <source>
        <strain>168</strain>
    </source>
</reference>
<reference key="2">
    <citation type="journal article" date="1997" name="Nature">
        <title>The complete genome sequence of the Gram-positive bacterium Bacillus subtilis.</title>
        <authorList>
            <person name="Kunst F."/>
            <person name="Ogasawara N."/>
            <person name="Moszer I."/>
            <person name="Albertini A.M."/>
            <person name="Alloni G."/>
            <person name="Azevedo V."/>
            <person name="Bertero M.G."/>
            <person name="Bessieres P."/>
            <person name="Bolotin A."/>
            <person name="Borchert S."/>
            <person name="Borriss R."/>
            <person name="Boursier L."/>
            <person name="Brans A."/>
            <person name="Braun M."/>
            <person name="Brignell S.C."/>
            <person name="Bron S."/>
            <person name="Brouillet S."/>
            <person name="Bruschi C.V."/>
            <person name="Caldwell B."/>
            <person name="Capuano V."/>
            <person name="Carter N.M."/>
            <person name="Choi S.-K."/>
            <person name="Codani J.-J."/>
            <person name="Connerton I.F."/>
            <person name="Cummings N.J."/>
            <person name="Daniel R.A."/>
            <person name="Denizot F."/>
            <person name="Devine K.M."/>
            <person name="Duesterhoeft A."/>
            <person name="Ehrlich S.D."/>
            <person name="Emmerson P.T."/>
            <person name="Entian K.-D."/>
            <person name="Errington J."/>
            <person name="Fabret C."/>
            <person name="Ferrari E."/>
            <person name="Foulger D."/>
            <person name="Fritz C."/>
            <person name="Fujita M."/>
            <person name="Fujita Y."/>
            <person name="Fuma S."/>
            <person name="Galizzi A."/>
            <person name="Galleron N."/>
            <person name="Ghim S.-Y."/>
            <person name="Glaser P."/>
            <person name="Goffeau A."/>
            <person name="Golightly E.J."/>
            <person name="Grandi G."/>
            <person name="Guiseppi G."/>
            <person name="Guy B.J."/>
            <person name="Haga K."/>
            <person name="Haiech J."/>
            <person name="Harwood C.R."/>
            <person name="Henaut A."/>
            <person name="Hilbert H."/>
            <person name="Holsappel S."/>
            <person name="Hosono S."/>
            <person name="Hullo M.-F."/>
            <person name="Itaya M."/>
            <person name="Jones L.-M."/>
            <person name="Joris B."/>
            <person name="Karamata D."/>
            <person name="Kasahara Y."/>
            <person name="Klaerr-Blanchard M."/>
            <person name="Klein C."/>
            <person name="Kobayashi Y."/>
            <person name="Koetter P."/>
            <person name="Koningstein G."/>
            <person name="Krogh S."/>
            <person name="Kumano M."/>
            <person name="Kurita K."/>
            <person name="Lapidus A."/>
            <person name="Lardinois S."/>
            <person name="Lauber J."/>
            <person name="Lazarevic V."/>
            <person name="Lee S.-M."/>
            <person name="Levine A."/>
            <person name="Liu H."/>
            <person name="Masuda S."/>
            <person name="Mauel C."/>
            <person name="Medigue C."/>
            <person name="Medina N."/>
            <person name="Mellado R.P."/>
            <person name="Mizuno M."/>
            <person name="Moestl D."/>
            <person name="Nakai S."/>
            <person name="Noback M."/>
            <person name="Noone D."/>
            <person name="O'Reilly M."/>
            <person name="Ogawa K."/>
            <person name="Ogiwara A."/>
            <person name="Oudega B."/>
            <person name="Park S.-H."/>
            <person name="Parro V."/>
            <person name="Pohl T.M."/>
            <person name="Portetelle D."/>
            <person name="Porwollik S."/>
            <person name="Prescott A.M."/>
            <person name="Presecan E."/>
            <person name="Pujic P."/>
            <person name="Purnelle B."/>
            <person name="Rapoport G."/>
            <person name="Rey M."/>
            <person name="Reynolds S."/>
            <person name="Rieger M."/>
            <person name="Rivolta C."/>
            <person name="Rocha E."/>
            <person name="Roche B."/>
            <person name="Rose M."/>
            <person name="Sadaie Y."/>
            <person name="Sato T."/>
            <person name="Scanlan E."/>
            <person name="Schleich S."/>
            <person name="Schroeter R."/>
            <person name="Scoffone F."/>
            <person name="Sekiguchi J."/>
            <person name="Sekowska A."/>
            <person name="Seror S.J."/>
            <person name="Serror P."/>
            <person name="Shin B.-S."/>
            <person name="Soldo B."/>
            <person name="Sorokin A."/>
            <person name="Tacconi E."/>
            <person name="Takagi T."/>
            <person name="Takahashi H."/>
            <person name="Takemaru K."/>
            <person name="Takeuchi M."/>
            <person name="Tamakoshi A."/>
            <person name="Tanaka T."/>
            <person name="Terpstra P."/>
            <person name="Tognoni A."/>
            <person name="Tosato V."/>
            <person name="Uchiyama S."/>
            <person name="Vandenbol M."/>
            <person name="Vannier F."/>
            <person name="Vassarotti A."/>
            <person name="Viari A."/>
            <person name="Wambutt R."/>
            <person name="Wedler E."/>
            <person name="Wedler H."/>
            <person name="Weitzenegger T."/>
            <person name="Winters P."/>
            <person name="Wipat A."/>
            <person name="Yamamoto H."/>
            <person name="Yamane K."/>
            <person name="Yasumoto K."/>
            <person name="Yata K."/>
            <person name="Yoshida K."/>
            <person name="Yoshikawa H.-F."/>
            <person name="Zumstein E."/>
            <person name="Yoshikawa H."/>
            <person name="Danchin A."/>
        </authorList>
    </citation>
    <scope>NUCLEOTIDE SEQUENCE [LARGE SCALE GENOMIC DNA]</scope>
    <source>
        <strain>168</strain>
    </source>
</reference>
<reference evidence="4 5" key="3">
    <citation type="journal article" date="2023" name="Nucleic Acids Res.">
        <title>Identification of a novel 5-aminomethyl-2-thiouridine methyltransferase in tRNA modification.</title>
        <authorList>
            <person name="Cho G."/>
            <person name="Lee J."/>
            <person name="Kim J."/>
        </authorList>
    </citation>
    <scope>X-RAY CRYSTALLOGRAPHY (1.17 ANGSTROMS) IN COMPLEXES WITH TRNA ANTICODON STEM LOOP; S-ADENOSYL-L-METHIONINE AND S-ADENOSYL-L-HOMOCYSTEINE</scope>
    <scope>FUNCTION</scope>
    <scope>CATALYTIC ACTIVITY</scope>
    <scope>PATHWAY</scope>
    <scope>SUBUNIT</scope>
    <scope>DISRUPTION PHENOTYPE</scope>
    <scope>MUTAGENESIS OF LYS-5; LYS-11; HIS-33; ASP-34; ASN-101; TYR-104; LYS-110; TYR-141; HIS-144; GLN-163; GLN-176 AND ASN-178</scope>
    <source>
        <strain>168</strain>
    </source>
</reference>
<gene>
    <name evidence="2" type="primary">mnmM</name>
    <name type="synonym">ytqB</name>
    <name type="ordered locus">BSU30490</name>
</gene>
<name>MNMM_BACSU</name>
<organism>
    <name type="scientific">Bacillus subtilis (strain 168)</name>
    <dbReference type="NCBI Taxonomy" id="224308"/>
    <lineage>
        <taxon>Bacteria</taxon>
        <taxon>Bacillati</taxon>
        <taxon>Bacillota</taxon>
        <taxon>Bacilli</taxon>
        <taxon>Bacillales</taxon>
        <taxon>Bacillaceae</taxon>
        <taxon>Bacillus</taxon>
    </lineage>
</organism>
<proteinExistence type="evidence at protein level"/>
<feature type="chain" id="PRO_0000390501" description="tRNA (mnm(5)s(2)U34)-methyltransferase">
    <location>
        <begin position="1"/>
        <end position="194"/>
    </location>
</feature>
<feature type="binding site" evidence="1 4">
    <location>
        <position position="33"/>
    </location>
    <ligand>
        <name>S-adenosyl-L-methionine</name>
        <dbReference type="ChEBI" id="CHEBI:59789"/>
    </ligand>
</feature>
<feature type="binding site" evidence="1 4">
    <location>
        <position position="34"/>
    </location>
    <ligand>
        <name>S-adenosyl-L-methionine</name>
        <dbReference type="ChEBI" id="CHEBI:59789"/>
    </ligand>
</feature>
<feature type="binding site" evidence="1 4">
    <location>
        <position position="52"/>
    </location>
    <ligand>
        <name>S-adenosyl-L-methionine</name>
        <dbReference type="ChEBI" id="CHEBI:59789"/>
    </ligand>
</feature>
<feature type="binding site" evidence="1 4">
    <location>
        <position position="54"/>
    </location>
    <ligand>
        <name>S-adenosyl-L-methionine</name>
        <dbReference type="ChEBI" id="CHEBI:59789"/>
    </ligand>
</feature>
<feature type="binding site" evidence="1 4">
    <location>
        <position position="79"/>
    </location>
    <ligand>
        <name>S-adenosyl-L-methionine</name>
        <dbReference type="ChEBI" id="CHEBI:59789"/>
    </ligand>
</feature>
<feature type="binding site" evidence="1 4">
    <location>
        <position position="80"/>
    </location>
    <ligand>
        <name>S-adenosyl-L-methionine</name>
        <dbReference type="ChEBI" id="CHEBI:59789"/>
    </ligand>
</feature>
<feature type="mutagenesis site" description="Does not affect activity." evidence="1">
    <original>K</original>
    <variation>A</variation>
    <location>
        <position position="5"/>
    </location>
</feature>
<feature type="mutagenesis site" description="Exhibits very low activity." evidence="1">
    <original>K</original>
    <variation>E</variation>
    <location>
        <position position="11"/>
    </location>
</feature>
<feature type="mutagenesis site" description="Retains 30% of activity." evidence="1">
    <original>H</original>
    <variation>A</variation>
    <location>
        <position position="33"/>
    </location>
</feature>
<feature type="mutagenesis site" description="Exhibits very low activity." evidence="1">
    <original>D</original>
    <variation>A</variation>
    <location>
        <position position="34"/>
    </location>
</feature>
<feature type="mutagenesis site" description="Exhibits very low activity." evidence="1">
    <original>N</original>
    <variation>A</variation>
    <variation>D</variation>
    <location>
        <position position="101"/>
    </location>
</feature>
<feature type="mutagenesis site" description="Exhibits very low activity." evidence="1">
    <original>Y</original>
    <variation>A</variation>
    <location>
        <position position="104"/>
    </location>
</feature>
<feature type="mutagenesis site" description="Retains 40% of activity." evidence="1">
    <original>Y</original>
    <variation>F</variation>
    <location>
        <position position="104"/>
    </location>
</feature>
<feature type="mutagenesis site" description="Exhibits very low activity." evidence="1">
    <original>K</original>
    <variation>E</variation>
    <location>
        <position position="110"/>
    </location>
</feature>
<feature type="mutagenesis site" description="Exhibits very low activity." evidence="1">
    <original>Y</original>
    <variation>F</variation>
    <location>
        <position position="141"/>
    </location>
</feature>
<feature type="mutagenesis site" description="Exhibits very low activity." evidence="1">
    <original>H</original>
    <variation>A</variation>
    <location>
        <position position="144"/>
    </location>
</feature>
<feature type="mutagenesis site" description="Retains 40% of activity." evidence="1">
    <original>Q</original>
    <variation>A</variation>
    <location>
        <position position="163"/>
    </location>
</feature>
<feature type="mutagenesis site" description="Retains 60% of activity." evidence="1">
    <original>Q</original>
    <variation>A</variation>
    <location>
        <position position="176"/>
    </location>
</feature>
<feature type="mutagenesis site" description="Retains 20% of activity." evidence="1">
    <original>N</original>
    <variation>A</variation>
    <location>
        <position position="178"/>
    </location>
</feature>
<feature type="helix" evidence="7">
    <location>
        <begin position="6"/>
        <end position="17"/>
    </location>
</feature>
<feature type="strand" evidence="7">
    <location>
        <begin position="23"/>
        <end position="27"/>
    </location>
</feature>
<feature type="helix" evidence="7">
    <location>
        <begin position="33"/>
        <end position="42"/>
    </location>
</feature>
<feature type="turn" evidence="6">
    <location>
        <begin position="43"/>
        <end position="45"/>
    </location>
</feature>
<feature type="strand" evidence="7">
    <location>
        <begin position="46"/>
        <end position="53"/>
    </location>
</feature>
<feature type="helix" evidence="7">
    <location>
        <begin position="55"/>
        <end position="70"/>
    </location>
</feature>
<feature type="strand" evidence="7">
    <location>
        <begin position="73"/>
        <end position="78"/>
    </location>
</feature>
<feature type="helix" evidence="7">
    <location>
        <begin position="80"/>
        <end position="82"/>
    </location>
</feature>
<feature type="helix" evidence="7">
    <location>
        <begin position="83"/>
        <end position="86"/>
    </location>
</feature>
<feature type="helix" evidence="7">
    <location>
        <begin position="89"/>
        <end position="91"/>
    </location>
</feature>
<feature type="turn" evidence="7">
    <location>
        <begin position="92"/>
        <end position="94"/>
    </location>
</feature>
<feature type="strand" evidence="7">
    <location>
        <begin position="95"/>
        <end position="104"/>
    </location>
</feature>
<feature type="helix" evidence="7">
    <location>
        <begin position="116"/>
        <end position="129"/>
    </location>
</feature>
<feature type="strand" evidence="7">
    <location>
        <begin position="130"/>
        <end position="140"/>
    </location>
</feature>
<feature type="helix" evidence="7">
    <location>
        <begin position="154"/>
        <end position="160"/>
    </location>
</feature>
<feature type="turn" evidence="7">
    <location>
        <begin position="163"/>
        <end position="165"/>
    </location>
</feature>
<feature type="strand" evidence="7">
    <location>
        <begin position="166"/>
        <end position="171"/>
    </location>
</feature>
<feature type="strand" evidence="7">
    <location>
        <begin position="182"/>
        <end position="188"/>
    </location>
</feature>
<evidence type="ECO:0000269" key="1">
    <source>
    </source>
</evidence>
<evidence type="ECO:0000303" key="2">
    <source>
    </source>
</evidence>
<evidence type="ECO:0000305" key="3"/>
<evidence type="ECO:0007744" key="4">
    <source>
        <dbReference type="PDB" id="8H0S"/>
    </source>
</evidence>
<evidence type="ECO:0007744" key="5">
    <source>
        <dbReference type="PDB" id="8H0T"/>
    </source>
</evidence>
<evidence type="ECO:0007829" key="6">
    <source>
        <dbReference type="PDB" id="8H0S"/>
    </source>
</evidence>
<evidence type="ECO:0007829" key="7">
    <source>
        <dbReference type="PDB" id="8H0T"/>
    </source>
</evidence>
<keyword id="KW-0002">3D-structure</keyword>
<keyword id="KW-0489">Methyltransferase</keyword>
<keyword id="KW-1185">Reference proteome</keyword>
<keyword id="KW-0949">S-adenosyl-L-methionine</keyword>
<keyword id="KW-0808">Transferase</keyword>
<keyword id="KW-0819">tRNA processing</keyword>
<comment type="function">
    <text evidence="1">Involved in the biosynthesis of 5-methylaminomethyl-2-thiouridine (mnm(5)s(2)U) at the wobble position (U34) in tRNA (PubMed:36762482). Catalyzes the transfer of a methyl group from S-adenosyl-L-methionine to nm(5)s(2)U34 to form mnm(5)s(2)U34 (PubMed:36762482).</text>
</comment>
<comment type="catalytic activity">
    <reaction evidence="1">
        <text>5-aminomethyl-2-thiouridine(34) in tRNA + S-adenosyl-L-methionine = 5-methylaminomethyl-2-thiouridine(34) in tRNA + S-adenosyl-L-homocysteine + H(+)</text>
        <dbReference type="Rhea" id="RHEA:19569"/>
        <dbReference type="Rhea" id="RHEA-COMP:10195"/>
        <dbReference type="Rhea" id="RHEA-COMP:10197"/>
        <dbReference type="ChEBI" id="CHEBI:15378"/>
        <dbReference type="ChEBI" id="CHEBI:57856"/>
        <dbReference type="ChEBI" id="CHEBI:59789"/>
        <dbReference type="ChEBI" id="CHEBI:74454"/>
        <dbReference type="ChEBI" id="CHEBI:74455"/>
        <dbReference type="EC" id="2.1.1.61"/>
    </reaction>
    <physiologicalReaction direction="left-to-right" evidence="1">
        <dbReference type="Rhea" id="RHEA:19570"/>
    </physiologicalReaction>
</comment>
<comment type="pathway">
    <text evidence="1">tRNA modification.</text>
</comment>
<comment type="subunit">
    <text evidence="1">Homodimer.</text>
</comment>
<comment type="disruption phenotype">
    <text evidence="1">Mutant accumulates nm(5)s(2)U34 and cannot form mnm(5)s(2)U34.</text>
</comment>
<comment type="similarity">
    <text evidence="3">Belongs to the methyltransferase superfamily. MnmM family.</text>
</comment>